<sequence length="549" mass="63436">MKNINFNNTQSYQDLKNHFRKIKNIHLRDLFASDLNRFKKFSIIFENEMLIDFSKNRITDETLIYLLNLAKETDVKSGIKLMFSGAKINKTENRSVLHIALRNRTNRPIILNNCNIMLEVNALLEKMKNFSKMVIHGEWKGYTGKSISNVVNIGIGGSDLGPYMVTEALRPYKNHLNMYYVSNIDGTHLTEVLKKINPENTIFLIASKTFTTDETITNAHSAKKWFLHYSQDQSALDKHFFALSANIKNALNFGININNIFKFWDWVGGRFSLWSSAGLSIMLSIGFDNFEKFLDGAHAMDNHFYHTNYKENIPILLALISIWYTNFFGSETEAIFPYDQYMHRFSAYFQQSNMESNGKSINRNGQRINYQTGPIIWGEPGTNGQHAFYQLIHQGTRLIPCDFIAPVFSHNDLNNHHMKLISNFFAQTQALAFGQSRDSILHRLILSKKNQDDIKRILPFKICKGNQPTNSILIRKITPYNLGALIALYEHKIFVQGYILNIFSFDQWGVELGKELSQNIYNYLNINVKNKSYDASTEGLINFYKSFMI</sequence>
<organism>
    <name type="scientific">Buchnera aphidicola subsp. Acyrthosiphon pisum (strain APS)</name>
    <name type="common">Acyrthosiphon pisum symbiotic bacterium</name>
    <dbReference type="NCBI Taxonomy" id="107806"/>
    <lineage>
        <taxon>Bacteria</taxon>
        <taxon>Pseudomonadati</taxon>
        <taxon>Pseudomonadota</taxon>
        <taxon>Gammaproteobacteria</taxon>
        <taxon>Enterobacterales</taxon>
        <taxon>Erwiniaceae</taxon>
        <taxon>Buchnera</taxon>
    </lineage>
</organism>
<name>G6PI_BUCAI</name>
<reference key="1">
    <citation type="journal article" date="2000" name="Nature">
        <title>Genome sequence of the endocellular bacterial symbiont of aphids Buchnera sp. APS.</title>
        <authorList>
            <person name="Shigenobu S."/>
            <person name="Watanabe H."/>
            <person name="Hattori M."/>
            <person name="Sakaki Y."/>
            <person name="Ishikawa H."/>
        </authorList>
    </citation>
    <scope>NUCLEOTIDE SEQUENCE [LARGE SCALE GENOMIC DNA]</scope>
    <source>
        <strain>APS</strain>
    </source>
</reference>
<dbReference type="EC" id="5.3.1.9" evidence="1"/>
<dbReference type="EMBL" id="BA000003">
    <property type="protein sequence ID" value="BAB13263.1"/>
    <property type="molecule type" value="Genomic_DNA"/>
</dbReference>
<dbReference type="RefSeq" id="NP_240377.1">
    <property type="nucleotide sequence ID" value="NC_002528.1"/>
</dbReference>
<dbReference type="RefSeq" id="WP_010896169.1">
    <property type="nucleotide sequence ID" value="NZ_AP036055.1"/>
</dbReference>
<dbReference type="SMR" id="P57636"/>
<dbReference type="STRING" id="563178.BUAP5A_566"/>
<dbReference type="EnsemblBacteria" id="BAB13263">
    <property type="protein sequence ID" value="BAB13263"/>
    <property type="gene ID" value="BAB13263"/>
</dbReference>
<dbReference type="KEGG" id="buc:BU573"/>
<dbReference type="PATRIC" id="fig|107806.10.peg.576"/>
<dbReference type="eggNOG" id="COG0166">
    <property type="taxonomic scope" value="Bacteria"/>
</dbReference>
<dbReference type="HOGENOM" id="CLU_017947_3_1_6"/>
<dbReference type="UniPathway" id="UPA00109">
    <property type="reaction ID" value="UER00181"/>
</dbReference>
<dbReference type="UniPathway" id="UPA00138"/>
<dbReference type="Proteomes" id="UP000001806">
    <property type="component" value="Chromosome"/>
</dbReference>
<dbReference type="GO" id="GO:0005829">
    <property type="term" value="C:cytosol"/>
    <property type="evidence" value="ECO:0007669"/>
    <property type="project" value="TreeGrafter"/>
</dbReference>
<dbReference type="GO" id="GO:0097367">
    <property type="term" value="F:carbohydrate derivative binding"/>
    <property type="evidence" value="ECO:0007669"/>
    <property type="project" value="InterPro"/>
</dbReference>
<dbReference type="GO" id="GO:0004347">
    <property type="term" value="F:glucose-6-phosphate isomerase activity"/>
    <property type="evidence" value="ECO:0007669"/>
    <property type="project" value="UniProtKB-UniRule"/>
</dbReference>
<dbReference type="GO" id="GO:0048029">
    <property type="term" value="F:monosaccharide binding"/>
    <property type="evidence" value="ECO:0007669"/>
    <property type="project" value="TreeGrafter"/>
</dbReference>
<dbReference type="GO" id="GO:0006094">
    <property type="term" value="P:gluconeogenesis"/>
    <property type="evidence" value="ECO:0007669"/>
    <property type="project" value="UniProtKB-UniRule"/>
</dbReference>
<dbReference type="GO" id="GO:0051156">
    <property type="term" value="P:glucose 6-phosphate metabolic process"/>
    <property type="evidence" value="ECO:0007669"/>
    <property type="project" value="TreeGrafter"/>
</dbReference>
<dbReference type="GO" id="GO:0006096">
    <property type="term" value="P:glycolytic process"/>
    <property type="evidence" value="ECO:0007669"/>
    <property type="project" value="UniProtKB-UniRule"/>
</dbReference>
<dbReference type="CDD" id="cd05015">
    <property type="entry name" value="SIS_PGI_1"/>
    <property type="match status" value="1"/>
</dbReference>
<dbReference type="CDD" id="cd05016">
    <property type="entry name" value="SIS_PGI_2"/>
    <property type="match status" value="1"/>
</dbReference>
<dbReference type="FunFam" id="3.40.50.10490:FF:000004">
    <property type="entry name" value="Glucose-6-phosphate isomerase"/>
    <property type="match status" value="1"/>
</dbReference>
<dbReference type="Gene3D" id="1.10.1390.10">
    <property type="match status" value="1"/>
</dbReference>
<dbReference type="Gene3D" id="3.40.50.10490">
    <property type="entry name" value="Glucose-6-phosphate isomerase like protein, domain 1"/>
    <property type="match status" value="2"/>
</dbReference>
<dbReference type="HAMAP" id="MF_00473">
    <property type="entry name" value="G6P_isomerase"/>
    <property type="match status" value="1"/>
</dbReference>
<dbReference type="InterPro" id="IPR001672">
    <property type="entry name" value="G6P_Isomerase"/>
</dbReference>
<dbReference type="InterPro" id="IPR023096">
    <property type="entry name" value="G6P_Isomerase_C"/>
</dbReference>
<dbReference type="InterPro" id="IPR018189">
    <property type="entry name" value="Phosphoglucose_isomerase_CS"/>
</dbReference>
<dbReference type="InterPro" id="IPR046348">
    <property type="entry name" value="SIS_dom_sf"/>
</dbReference>
<dbReference type="InterPro" id="IPR035476">
    <property type="entry name" value="SIS_PGI_1"/>
</dbReference>
<dbReference type="InterPro" id="IPR035482">
    <property type="entry name" value="SIS_PGI_2"/>
</dbReference>
<dbReference type="NCBIfam" id="NF001211">
    <property type="entry name" value="PRK00179.1"/>
    <property type="match status" value="1"/>
</dbReference>
<dbReference type="PANTHER" id="PTHR11469">
    <property type="entry name" value="GLUCOSE-6-PHOSPHATE ISOMERASE"/>
    <property type="match status" value="1"/>
</dbReference>
<dbReference type="PANTHER" id="PTHR11469:SF1">
    <property type="entry name" value="GLUCOSE-6-PHOSPHATE ISOMERASE"/>
    <property type="match status" value="1"/>
</dbReference>
<dbReference type="Pfam" id="PF00342">
    <property type="entry name" value="PGI"/>
    <property type="match status" value="1"/>
</dbReference>
<dbReference type="PRINTS" id="PR00662">
    <property type="entry name" value="G6PISOMERASE"/>
</dbReference>
<dbReference type="SUPFAM" id="SSF53697">
    <property type="entry name" value="SIS domain"/>
    <property type="match status" value="1"/>
</dbReference>
<dbReference type="PROSITE" id="PS00765">
    <property type="entry name" value="P_GLUCOSE_ISOMERASE_1"/>
    <property type="match status" value="1"/>
</dbReference>
<dbReference type="PROSITE" id="PS00174">
    <property type="entry name" value="P_GLUCOSE_ISOMERASE_2"/>
    <property type="match status" value="1"/>
</dbReference>
<dbReference type="PROSITE" id="PS51463">
    <property type="entry name" value="P_GLUCOSE_ISOMERASE_3"/>
    <property type="match status" value="1"/>
</dbReference>
<keyword id="KW-0963">Cytoplasm</keyword>
<keyword id="KW-0312">Gluconeogenesis</keyword>
<keyword id="KW-0324">Glycolysis</keyword>
<keyword id="KW-0413">Isomerase</keyword>
<keyword id="KW-1185">Reference proteome</keyword>
<evidence type="ECO:0000255" key="1">
    <source>
        <dbReference type="HAMAP-Rule" id="MF_00473"/>
    </source>
</evidence>
<evidence type="ECO:0000305" key="2"/>
<accession>P57636</accession>
<comment type="function">
    <text evidence="1">Catalyzes the reversible isomerization of glucose-6-phosphate to fructose-6-phosphate.</text>
</comment>
<comment type="catalytic activity">
    <reaction evidence="1">
        <text>alpha-D-glucose 6-phosphate = beta-D-fructose 6-phosphate</text>
        <dbReference type="Rhea" id="RHEA:11816"/>
        <dbReference type="ChEBI" id="CHEBI:57634"/>
        <dbReference type="ChEBI" id="CHEBI:58225"/>
        <dbReference type="EC" id="5.3.1.9"/>
    </reaction>
</comment>
<comment type="pathway">
    <text evidence="1">Carbohydrate biosynthesis; gluconeogenesis.</text>
</comment>
<comment type="pathway">
    <text evidence="1">Carbohydrate degradation; glycolysis; D-glyceraldehyde 3-phosphate and glycerone phosphate from D-glucose: step 2/4.</text>
</comment>
<comment type="subcellular location">
    <subcellularLocation>
        <location evidence="1">Cytoplasm</location>
    </subcellularLocation>
</comment>
<comment type="similarity">
    <text evidence="1 2">Belongs to the GPI family.</text>
</comment>
<gene>
    <name evidence="1" type="primary">pgi</name>
    <name type="ordered locus">BU573</name>
</gene>
<feature type="chain" id="PRO_0000180611" description="Glucose-6-phosphate isomerase">
    <location>
        <begin position="1"/>
        <end position="549"/>
    </location>
</feature>
<feature type="active site" description="Proton donor" evidence="1">
    <location>
        <position position="355"/>
    </location>
</feature>
<feature type="active site" evidence="1">
    <location>
        <position position="386"/>
    </location>
</feature>
<feature type="active site" evidence="1">
    <location>
        <position position="514"/>
    </location>
</feature>
<protein>
    <recommendedName>
        <fullName evidence="1">Glucose-6-phosphate isomerase</fullName>
        <shortName evidence="1">GPI</shortName>
        <ecNumber evidence="1">5.3.1.9</ecNumber>
    </recommendedName>
    <alternativeName>
        <fullName evidence="1">Phosphoglucose isomerase</fullName>
        <shortName evidence="1">PGI</shortName>
    </alternativeName>
    <alternativeName>
        <fullName evidence="1">Phosphohexose isomerase</fullName>
        <shortName evidence="1">PHI</shortName>
    </alternativeName>
</protein>
<proteinExistence type="inferred from homology"/>